<sequence length="202" mass="22763">MSTFFEPENGMKQNAKTERILDVALELLETEGEFGLTMRQVATQADMSLSNVQYYFKSEDLLLVAMADRYFQRCLTTMAEHPPLSAGRDQHAQLRALLRELLGHGLEISEMCRIFREYWAIATRNETVHGYLKSYYRDLAEVMAEKLAPLASSEKALAVAVSLVIPYVEGYSVTAIAMPESIDTISETLTNVVLEQLRISNS</sequence>
<keyword id="KW-0238">DNA-binding</keyword>
<keyword id="KW-0804">Transcription</keyword>
<keyword id="KW-0805">Transcription regulation</keyword>
<protein>
    <recommendedName>
        <fullName>Uncharacterized HTH-type transcriptional regulator in dhlA 5'region</fullName>
    </recommendedName>
</protein>
<organism>
    <name type="scientific">Xanthobacter autotrophicus</name>
    <dbReference type="NCBI Taxonomy" id="280"/>
    <lineage>
        <taxon>Bacteria</taxon>
        <taxon>Pseudomonadati</taxon>
        <taxon>Pseudomonadota</taxon>
        <taxon>Alphaproteobacteria</taxon>
        <taxon>Hyphomicrobiales</taxon>
        <taxon>Xanthobacteraceae</taxon>
        <taxon>Xanthobacter</taxon>
    </lineage>
</organism>
<feature type="chain" id="PRO_0000070674" description="Uncharacterized HTH-type transcriptional regulator in dhlA 5'region">
    <location>
        <begin position="1"/>
        <end position="202"/>
    </location>
</feature>
<feature type="domain" description="HTH tetR-type" evidence="1">
    <location>
        <begin position="14"/>
        <end position="74"/>
    </location>
</feature>
<evidence type="ECO:0000255" key="1">
    <source>
        <dbReference type="PROSITE-ProRule" id="PRU00335"/>
    </source>
</evidence>
<name>YDH1_XANAU</name>
<reference key="1">
    <citation type="journal article" date="1989" name="J. Bacteriol.">
        <title>Cloning of 1,2-dichloroethane degradation genes of Xanthobacter autotrophicus GJ10 and expression and sequencing of the dhlA gene.</title>
        <authorList>
            <person name="Janssen D.B."/>
            <person name="Pries F."/>
            <person name="van der Ploeg J."/>
            <person name="Kazemier B."/>
            <person name="Terpstra P."/>
            <person name="Witholt B."/>
        </authorList>
    </citation>
    <scope>NUCLEOTIDE SEQUENCE [GENOMIC DNA]</scope>
    <source>
        <strain>GJ10</strain>
    </source>
</reference>
<accession>P22645</accession>
<proteinExistence type="predicted"/>
<dbReference type="EMBL" id="M26950">
    <property type="protein sequence ID" value="AAA88690.1"/>
    <property type="molecule type" value="Genomic_DNA"/>
</dbReference>
<dbReference type="PIR" id="A43718">
    <property type="entry name" value="A43718"/>
</dbReference>
<dbReference type="SMR" id="P22645"/>
<dbReference type="GO" id="GO:0003700">
    <property type="term" value="F:DNA-binding transcription factor activity"/>
    <property type="evidence" value="ECO:0007669"/>
    <property type="project" value="TreeGrafter"/>
</dbReference>
<dbReference type="GO" id="GO:0000976">
    <property type="term" value="F:transcription cis-regulatory region binding"/>
    <property type="evidence" value="ECO:0007669"/>
    <property type="project" value="TreeGrafter"/>
</dbReference>
<dbReference type="Gene3D" id="1.10.357.10">
    <property type="entry name" value="Tetracycline Repressor, domain 2"/>
    <property type="match status" value="1"/>
</dbReference>
<dbReference type="InterPro" id="IPR009057">
    <property type="entry name" value="Homeodomain-like_sf"/>
</dbReference>
<dbReference type="InterPro" id="IPR050109">
    <property type="entry name" value="HTH-type_TetR-like_transc_reg"/>
</dbReference>
<dbReference type="InterPro" id="IPR001647">
    <property type="entry name" value="HTH_TetR"/>
</dbReference>
<dbReference type="InterPro" id="IPR036271">
    <property type="entry name" value="Tet_transcr_reg_TetR-rel_C_sf"/>
</dbReference>
<dbReference type="PANTHER" id="PTHR30055:SF226">
    <property type="entry name" value="HTH-TYPE TRANSCRIPTIONAL REGULATOR PKSA"/>
    <property type="match status" value="1"/>
</dbReference>
<dbReference type="PANTHER" id="PTHR30055">
    <property type="entry name" value="HTH-TYPE TRANSCRIPTIONAL REGULATOR RUTR"/>
    <property type="match status" value="1"/>
</dbReference>
<dbReference type="SUPFAM" id="SSF46689">
    <property type="entry name" value="Homeodomain-like"/>
    <property type="match status" value="1"/>
</dbReference>
<dbReference type="SUPFAM" id="SSF48498">
    <property type="entry name" value="Tetracyclin repressor-like, C-terminal domain"/>
    <property type="match status" value="1"/>
</dbReference>
<dbReference type="PROSITE" id="PS50977">
    <property type="entry name" value="HTH_TETR_2"/>
    <property type="match status" value="1"/>
</dbReference>